<evidence type="ECO:0000255" key="1">
    <source>
        <dbReference type="HAMAP-Rule" id="MF_00121"/>
    </source>
</evidence>
<keyword id="KW-0067">ATP-binding</keyword>
<keyword id="KW-0436">Ligase</keyword>
<keyword id="KW-0547">Nucleotide-binding</keyword>
<keyword id="KW-0648">Protein biosynthesis</keyword>
<keyword id="KW-1185">Reference proteome</keyword>
<comment type="function">
    <text evidence="1">Allows the formation of correctly charged Asn-tRNA(Asn) or Gln-tRNA(Gln) through the transamidation of misacylated Asp-tRNA(Asn) or Glu-tRNA(Gln) in organisms which lack either or both of asparaginyl-tRNA or glutaminyl-tRNA synthetases. The reaction takes place in the presence of glutamine and ATP through an activated phospho-Asp-tRNA(Asn) or phospho-Glu-tRNA(Gln).</text>
</comment>
<comment type="catalytic activity">
    <reaction evidence="1">
        <text>L-glutamyl-tRNA(Gln) + L-glutamine + ATP + H2O = L-glutaminyl-tRNA(Gln) + L-glutamate + ADP + phosphate + H(+)</text>
        <dbReference type="Rhea" id="RHEA:17521"/>
        <dbReference type="Rhea" id="RHEA-COMP:9681"/>
        <dbReference type="Rhea" id="RHEA-COMP:9684"/>
        <dbReference type="ChEBI" id="CHEBI:15377"/>
        <dbReference type="ChEBI" id="CHEBI:15378"/>
        <dbReference type="ChEBI" id="CHEBI:29985"/>
        <dbReference type="ChEBI" id="CHEBI:30616"/>
        <dbReference type="ChEBI" id="CHEBI:43474"/>
        <dbReference type="ChEBI" id="CHEBI:58359"/>
        <dbReference type="ChEBI" id="CHEBI:78520"/>
        <dbReference type="ChEBI" id="CHEBI:78521"/>
        <dbReference type="ChEBI" id="CHEBI:456216"/>
    </reaction>
</comment>
<comment type="catalytic activity">
    <reaction evidence="1">
        <text>L-aspartyl-tRNA(Asn) + L-glutamine + ATP + H2O = L-asparaginyl-tRNA(Asn) + L-glutamate + ADP + phosphate + 2 H(+)</text>
        <dbReference type="Rhea" id="RHEA:14513"/>
        <dbReference type="Rhea" id="RHEA-COMP:9674"/>
        <dbReference type="Rhea" id="RHEA-COMP:9677"/>
        <dbReference type="ChEBI" id="CHEBI:15377"/>
        <dbReference type="ChEBI" id="CHEBI:15378"/>
        <dbReference type="ChEBI" id="CHEBI:29985"/>
        <dbReference type="ChEBI" id="CHEBI:30616"/>
        <dbReference type="ChEBI" id="CHEBI:43474"/>
        <dbReference type="ChEBI" id="CHEBI:58359"/>
        <dbReference type="ChEBI" id="CHEBI:78515"/>
        <dbReference type="ChEBI" id="CHEBI:78516"/>
        <dbReference type="ChEBI" id="CHEBI:456216"/>
    </reaction>
</comment>
<comment type="subunit">
    <text evidence="1">Heterotrimer of A, B and C subunits.</text>
</comment>
<comment type="similarity">
    <text evidence="1">Belongs to the GatB/GatE family. GatB subfamily.</text>
</comment>
<proteinExistence type="inferred from homology"/>
<accession>P61341</accession>
<reference key="1">
    <citation type="journal article" date="2004" name="Science">
        <title>A predator unmasked: life cycle of Bdellovibrio bacteriovorus from a genomic perspective.</title>
        <authorList>
            <person name="Rendulic S."/>
            <person name="Jagtap P."/>
            <person name="Rosinus A."/>
            <person name="Eppinger M."/>
            <person name="Baar C."/>
            <person name="Lanz C."/>
            <person name="Keller H."/>
            <person name="Lambert C."/>
            <person name="Evans K.J."/>
            <person name="Goesmann A."/>
            <person name="Meyer F."/>
            <person name="Sockett R.E."/>
            <person name="Schuster S.C."/>
        </authorList>
    </citation>
    <scope>NUCLEOTIDE SEQUENCE [LARGE SCALE GENOMIC DNA]</scope>
    <source>
        <strain>ATCC 15356 / DSM 50701 / NCIMB 9529 / HD100</strain>
    </source>
</reference>
<sequence>MSSRGYEAVIGIEIHVQLSTKTKIFSSESTAFEAGDNENTSPVSVGMPGTLPVLNSKVVEYSIKTGLALGCDIRRKSVFARKNYFYPDLPKGYQISQYDQPICENGSITFKVDGKEKTVSITRAHMEEDAGKSNHHGEYTLINYNRSGIPLLEVVSGPDMRTPQEAAEYARTIRQIVRYLDVCDGNLEEGSLRCDCNVSVRKEGAKQFGTKVEIKNINSFRFVEKAIEYEIERQIDCVERGDKIIQETRLWDPDKNRTFSMRAKEDAQDYRYFPDPDLQPVIVTDSMIEKYKKELPELPIARAQRFQDDHALPELDATVLTTEKDLADFYEDTAKESKNFKASSNWIMTELLRELNSANKNIKDSPIKPAQLGKMIAMIDKGTISGKIAKTIFQEMWASGNDPEVIMKEKGLVQISDPAAIEKLVDEVLAANAQTVEDHKSGKKKNLFGFFVGAVMKASKGQANPDLVNKILLEKLK</sequence>
<feature type="chain" id="PRO_0000148763" description="Aspartyl/glutamyl-tRNA(Asn/Gln) amidotransferase subunit B">
    <location>
        <begin position="1"/>
        <end position="477"/>
    </location>
</feature>
<gene>
    <name evidence="1" type="primary">gatB</name>
    <name type="ordered locus">Bd0060</name>
</gene>
<organism>
    <name type="scientific">Bdellovibrio bacteriovorus (strain ATCC 15356 / DSM 50701 / NCIMB 9529 / HD100)</name>
    <dbReference type="NCBI Taxonomy" id="264462"/>
    <lineage>
        <taxon>Bacteria</taxon>
        <taxon>Pseudomonadati</taxon>
        <taxon>Bdellovibrionota</taxon>
        <taxon>Bdellovibrionia</taxon>
        <taxon>Bdellovibrionales</taxon>
        <taxon>Pseudobdellovibrionaceae</taxon>
        <taxon>Bdellovibrio</taxon>
    </lineage>
</organism>
<protein>
    <recommendedName>
        <fullName evidence="1">Aspartyl/glutamyl-tRNA(Asn/Gln) amidotransferase subunit B</fullName>
        <shortName evidence="1">Asp/Glu-ADT subunit B</shortName>
        <ecNumber evidence="1">6.3.5.-</ecNumber>
    </recommendedName>
</protein>
<name>GATB_BDEBA</name>
<dbReference type="EC" id="6.3.5.-" evidence="1"/>
<dbReference type="EMBL" id="BX842646">
    <property type="protein sequence ID" value="CAE77741.1"/>
    <property type="molecule type" value="Genomic_DNA"/>
</dbReference>
<dbReference type="RefSeq" id="WP_011162682.1">
    <property type="nucleotide sequence ID" value="NC_005363.1"/>
</dbReference>
<dbReference type="SMR" id="P61341"/>
<dbReference type="STRING" id="264462.Bd0060"/>
<dbReference type="GeneID" id="93011212"/>
<dbReference type="KEGG" id="bba:Bd0060"/>
<dbReference type="eggNOG" id="COG0064">
    <property type="taxonomic scope" value="Bacteria"/>
</dbReference>
<dbReference type="HOGENOM" id="CLU_019240_0_0_7"/>
<dbReference type="Proteomes" id="UP000008080">
    <property type="component" value="Chromosome"/>
</dbReference>
<dbReference type="GO" id="GO:0050566">
    <property type="term" value="F:asparaginyl-tRNA synthase (glutamine-hydrolyzing) activity"/>
    <property type="evidence" value="ECO:0007669"/>
    <property type="project" value="RHEA"/>
</dbReference>
<dbReference type="GO" id="GO:0005524">
    <property type="term" value="F:ATP binding"/>
    <property type="evidence" value="ECO:0007669"/>
    <property type="project" value="UniProtKB-KW"/>
</dbReference>
<dbReference type="GO" id="GO:0050567">
    <property type="term" value="F:glutaminyl-tRNA synthase (glutamine-hydrolyzing) activity"/>
    <property type="evidence" value="ECO:0007669"/>
    <property type="project" value="UniProtKB-UniRule"/>
</dbReference>
<dbReference type="GO" id="GO:0070681">
    <property type="term" value="P:glutaminyl-tRNAGln biosynthesis via transamidation"/>
    <property type="evidence" value="ECO:0007669"/>
    <property type="project" value="TreeGrafter"/>
</dbReference>
<dbReference type="GO" id="GO:0006412">
    <property type="term" value="P:translation"/>
    <property type="evidence" value="ECO:0007669"/>
    <property type="project" value="UniProtKB-UniRule"/>
</dbReference>
<dbReference type="FunFam" id="1.10.10.410:FF:000001">
    <property type="entry name" value="Aspartyl/glutamyl-tRNA(Asn/Gln) amidotransferase subunit B"/>
    <property type="match status" value="1"/>
</dbReference>
<dbReference type="Gene3D" id="1.10.10.410">
    <property type="match status" value="1"/>
</dbReference>
<dbReference type="Gene3D" id="1.10.150.380">
    <property type="entry name" value="GatB domain, N-terminal subdomain"/>
    <property type="match status" value="1"/>
</dbReference>
<dbReference type="HAMAP" id="MF_00121">
    <property type="entry name" value="GatB"/>
    <property type="match status" value="1"/>
</dbReference>
<dbReference type="InterPro" id="IPR017959">
    <property type="entry name" value="Asn/Gln-tRNA_amidoTrfase_suB/E"/>
</dbReference>
<dbReference type="InterPro" id="IPR006075">
    <property type="entry name" value="Asn/Gln-tRNA_Trfase_suB/E_cat"/>
</dbReference>
<dbReference type="InterPro" id="IPR018027">
    <property type="entry name" value="Asn/Gln_amidotransferase"/>
</dbReference>
<dbReference type="InterPro" id="IPR003789">
    <property type="entry name" value="Asn/Gln_tRNA_amidoTrase-B-like"/>
</dbReference>
<dbReference type="InterPro" id="IPR004413">
    <property type="entry name" value="GatB"/>
</dbReference>
<dbReference type="InterPro" id="IPR042114">
    <property type="entry name" value="GatB_C_1"/>
</dbReference>
<dbReference type="InterPro" id="IPR023168">
    <property type="entry name" value="GatB_Yqey_C_2"/>
</dbReference>
<dbReference type="InterPro" id="IPR017958">
    <property type="entry name" value="Gln-tRNA_amidoTrfase_suB_CS"/>
</dbReference>
<dbReference type="InterPro" id="IPR014746">
    <property type="entry name" value="Gln_synth/guanido_kin_cat_dom"/>
</dbReference>
<dbReference type="NCBIfam" id="TIGR00133">
    <property type="entry name" value="gatB"/>
    <property type="match status" value="1"/>
</dbReference>
<dbReference type="NCBIfam" id="NF004012">
    <property type="entry name" value="PRK05477.1-2"/>
    <property type="match status" value="1"/>
</dbReference>
<dbReference type="NCBIfam" id="NF004014">
    <property type="entry name" value="PRK05477.1-4"/>
    <property type="match status" value="1"/>
</dbReference>
<dbReference type="NCBIfam" id="NF004015">
    <property type="entry name" value="PRK05477.1-5"/>
    <property type="match status" value="1"/>
</dbReference>
<dbReference type="PANTHER" id="PTHR11659">
    <property type="entry name" value="GLUTAMYL-TRNA GLN AMIDOTRANSFERASE SUBUNIT B MITOCHONDRIAL AND PROKARYOTIC PET112-RELATED"/>
    <property type="match status" value="1"/>
</dbReference>
<dbReference type="PANTHER" id="PTHR11659:SF0">
    <property type="entry name" value="GLUTAMYL-TRNA(GLN) AMIDOTRANSFERASE SUBUNIT B, MITOCHONDRIAL"/>
    <property type="match status" value="1"/>
</dbReference>
<dbReference type="Pfam" id="PF02934">
    <property type="entry name" value="GatB_N"/>
    <property type="match status" value="1"/>
</dbReference>
<dbReference type="Pfam" id="PF02637">
    <property type="entry name" value="GatB_Yqey"/>
    <property type="match status" value="1"/>
</dbReference>
<dbReference type="SMART" id="SM00845">
    <property type="entry name" value="GatB_Yqey"/>
    <property type="match status" value="1"/>
</dbReference>
<dbReference type="SUPFAM" id="SSF89095">
    <property type="entry name" value="GatB/YqeY motif"/>
    <property type="match status" value="1"/>
</dbReference>
<dbReference type="SUPFAM" id="SSF55931">
    <property type="entry name" value="Glutamine synthetase/guanido kinase"/>
    <property type="match status" value="1"/>
</dbReference>
<dbReference type="PROSITE" id="PS01234">
    <property type="entry name" value="GATB"/>
    <property type="match status" value="1"/>
</dbReference>